<reference key="1">
    <citation type="journal article" date="2006" name="Mol. Microbiol.">
        <title>Role of pathogenicity island-associated integrases in the genome plasticity of uropathogenic Escherichia coli strain 536.</title>
        <authorList>
            <person name="Hochhut B."/>
            <person name="Wilde C."/>
            <person name="Balling G."/>
            <person name="Middendorf B."/>
            <person name="Dobrindt U."/>
            <person name="Brzuszkiewicz E."/>
            <person name="Gottschalk G."/>
            <person name="Carniel E."/>
            <person name="Hacker J."/>
        </authorList>
    </citation>
    <scope>NUCLEOTIDE SEQUENCE [LARGE SCALE GENOMIC DNA]</scope>
    <source>
        <strain>536 / UPEC</strain>
    </source>
</reference>
<protein>
    <recommendedName>
        <fullName evidence="2">Sigma factor-binding protein Crl</fullName>
    </recommendedName>
</protein>
<keyword id="KW-0010">Activator</keyword>
<keyword id="KW-0175">Coiled coil</keyword>
<keyword id="KW-0963">Cytoplasm</keyword>
<keyword id="KW-0804">Transcription</keyword>
<keyword id="KW-0805">Transcription regulation</keyword>
<feature type="initiator methionine" description="Removed" evidence="1">
    <location>
        <position position="1"/>
    </location>
</feature>
<feature type="chain" id="PRO_0000268899" description="Sigma factor-binding protein Crl">
    <location>
        <begin position="2"/>
        <end position="133"/>
    </location>
</feature>
<feature type="region of interest" description="Essential for activity" evidence="2">
    <location>
        <begin position="99"/>
        <end position="122"/>
    </location>
</feature>
<feature type="coiled-coil region" evidence="2">
    <location>
        <begin position="90"/>
        <end position="116"/>
    </location>
</feature>
<gene>
    <name evidence="2" type="primary">crl</name>
    <name type="ordered locus">ECP_0269</name>
</gene>
<accession>Q0TL76</accession>
<evidence type="ECO:0000250" key="1"/>
<evidence type="ECO:0000255" key="2">
    <source>
        <dbReference type="HAMAP-Rule" id="MF_01178"/>
    </source>
</evidence>
<comment type="function">
    <text evidence="2">Binds to the sigma-S subunit of RNA polymerase, activating expression of sigma-S-regulated genes. Stimulates RNA polymerase holoenzyme formation and may bind to several other sigma factors, such as sigma-70 and sigma-32.</text>
</comment>
<comment type="subcellular location">
    <subcellularLocation>
        <location evidence="2">Cytoplasm</location>
    </subcellularLocation>
</comment>
<comment type="similarity">
    <text evidence="2">Belongs to the Crl family.</text>
</comment>
<dbReference type="EMBL" id="CP000247">
    <property type="protein sequence ID" value="ABG68305.1"/>
    <property type="molecule type" value="Genomic_DNA"/>
</dbReference>
<dbReference type="RefSeq" id="WP_000174703.1">
    <property type="nucleotide sequence ID" value="NC_008253.1"/>
</dbReference>
<dbReference type="SMR" id="Q0TL76"/>
<dbReference type="KEGG" id="ecp:ECP_0269"/>
<dbReference type="HOGENOM" id="CLU_136773_0_0_6"/>
<dbReference type="Proteomes" id="UP000009182">
    <property type="component" value="Chromosome"/>
</dbReference>
<dbReference type="GO" id="GO:0005737">
    <property type="term" value="C:cytoplasm"/>
    <property type="evidence" value="ECO:0007669"/>
    <property type="project" value="UniProtKB-SubCell"/>
</dbReference>
<dbReference type="GO" id="GO:0045893">
    <property type="term" value="P:positive regulation of DNA-templated transcription"/>
    <property type="evidence" value="ECO:0007669"/>
    <property type="project" value="UniProtKB-UniRule"/>
</dbReference>
<dbReference type="FunFam" id="3.30.310.230:FF:000001">
    <property type="entry name" value="Sigma factor-binding protein Crl"/>
    <property type="match status" value="1"/>
</dbReference>
<dbReference type="Gene3D" id="3.30.310.230">
    <property type="entry name" value="Sigma factor-binding protein Crl monomer"/>
    <property type="match status" value="1"/>
</dbReference>
<dbReference type="HAMAP" id="MF_01178">
    <property type="entry name" value="Crl"/>
    <property type="match status" value="1"/>
</dbReference>
<dbReference type="InterPro" id="IPR009986">
    <property type="entry name" value="Tscrpt_reg_Crl"/>
</dbReference>
<dbReference type="InterPro" id="IPR038208">
    <property type="entry name" value="Tscrpt_reg_Crl_sf"/>
</dbReference>
<dbReference type="NCBIfam" id="NF008217">
    <property type="entry name" value="PRK10984.1"/>
    <property type="match status" value="1"/>
</dbReference>
<dbReference type="Pfam" id="PF07417">
    <property type="entry name" value="Crl"/>
    <property type="match status" value="1"/>
</dbReference>
<name>CRL_ECOL5</name>
<proteinExistence type="inferred from homology"/>
<organism>
    <name type="scientific">Escherichia coli O6:K15:H31 (strain 536 / UPEC)</name>
    <dbReference type="NCBI Taxonomy" id="362663"/>
    <lineage>
        <taxon>Bacteria</taxon>
        <taxon>Pseudomonadati</taxon>
        <taxon>Pseudomonadota</taxon>
        <taxon>Gammaproteobacteria</taxon>
        <taxon>Enterobacterales</taxon>
        <taxon>Enterobacteriaceae</taxon>
        <taxon>Escherichia</taxon>
    </lineage>
</organism>
<sequence>MTLPSGHPKSRLVKKFTALGPYIREGKCEDNRFFFDCLAVCVNVKPAPEVREFWGWWMELEAQESRFTYSYQFGLFDKAGDWTSVQIKDAEVVERLEHTLREFHEKLRELLATLNLKLEPADDFRDEPVKLTA</sequence>